<feature type="chain" id="PRO_1000127834" description="ATP synthase epsilon chain">
    <location>
        <begin position="1"/>
        <end position="141"/>
    </location>
</feature>
<sequence>MATIKVDVVSAEEQIFSGQAKFVALPGEAGELGILPGHTPLITRIRPGAVRIEAENGEEEFVFVAGGILEIQPGAVTVLADTAIRGKDLDEAKAEDARKRAEEALQNTGSNLEYATAQAELAYATAQLAAIQRLRKLRGQN</sequence>
<gene>
    <name evidence="1" type="primary">atpC</name>
    <name type="ordered locus">Bphyt_3893</name>
</gene>
<name>ATPE_PARPJ</name>
<accession>B2T7J9</accession>
<proteinExistence type="inferred from homology"/>
<keyword id="KW-0066">ATP synthesis</keyword>
<keyword id="KW-0997">Cell inner membrane</keyword>
<keyword id="KW-1003">Cell membrane</keyword>
<keyword id="KW-0139">CF(1)</keyword>
<keyword id="KW-0375">Hydrogen ion transport</keyword>
<keyword id="KW-0406">Ion transport</keyword>
<keyword id="KW-0472">Membrane</keyword>
<keyword id="KW-0813">Transport</keyword>
<protein>
    <recommendedName>
        <fullName evidence="1">ATP synthase epsilon chain</fullName>
    </recommendedName>
    <alternativeName>
        <fullName evidence="1">ATP synthase F1 sector epsilon subunit</fullName>
    </alternativeName>
    <alternativeName>
        <fullName evidence="1">F-ATPase epsilon subunit</fullName>
    </alternativeName>
</protein>
<dbReference type="EMBL" id="CP001052">
    <property type="protein sequence ID" value="ACD18280.1"/>
    <property type="molecule type" value="Genomic_DNA"/>
</dbReference>
<dbReference type="RefSeq" id="WP_012434800.1">
    <property type="nucleotide sequence ID" value="NC_010681.1"/>
</dbReference>
<dbReference type="SMR" id="B2T7J9"/>
<dbReference type="STRING" id="398527.Bphyt_3893"/>
<dbReference type="KEGG" id="bpy:Bphyt_3893"/>
<dbReference type="eggNOG" id="COG0355">
    <property type="taxonomic scope" value="Bacteria"/>
</dbReference>
<dbReference type="HOGENOM" id="CLU_084338_2_0_4"/>
<dbReference type="OrthoDB" id="9791445at2"/>
<dbReference type="Proteomes" id="UP000001739">
    <property type="component" value="Chromosome 1"/>
</dbReference>
<dbReference type="GO" id="GO:0005886">
    <property type="term" value="C:plasma membrane"/>
    <property type="evidence" value="ECO:0007669"/>
    <property type="project" value="UniProtKB-SubCell"/>
</dbReference>
<dbReference type="GO" id="GO:0045259">
    <property type="term" value="C:proton-transporting ATP synthase complex"/>
    <property type="evidence" value="ECO:0007669"/>
    <property type="project" value="UniProtKB-KW"/>
</dbReference>
<dbReference type="GO" id="GO:0005524">
    <property type="term" value="F:ATP binding"/>
    <property type="evidence" value="ECO:0007669"/>
    <property type="project" value="UniProtKB-UniRule"/>
</dbReference>
<dbReference type="GO" id="GO:0046933">
    <property type="term" value="F:proton-transporting ATP synthase activity, rotational mechanism"/>
    <property type="evidence" value="ECO:0007669"/>
    <property type="project" value="UniProtKB-UniRule"/>
</dbReference>
<dbReference type="CDD" id="cd12152">
    <property type="entry name" value="F1-ATPase_delta"/>
    <property type="match status" value="1"/>
</dbReference>
<dbReference type="FunFam" id="2.60.15.10:FF:000001">
    <property type="entry name" value="ATP synthase epsilon chain"/>
    <property type="match status" value="1"/>
</dbReference>
<dbReference type="Gene3D" id="1.20.5.440">
    <property type="entry name" value="ATP synthase delta/epsilon subunit, C-terminal domain"/>
    <property type="match status" value="1"/>
</dbReference>
<dbReference type="Gene3D" id="2.60.15.10">
    <property type="entry name" value="F0F1 ATP synthase delta/epsilon subunit, N-terminal"/>
    <property type="match status" value="1"/>
</dbReference>
<dbReference type="HAMAP" id="MF_00530">
    <property type="entry name" value="ATP_synth_epsil_bac"/>
    <property type="match status" value="1"/>
</dbReference>
<dbReference type="InterPro" id="IPR036794">
    <property type="entry name" value="ATP_F1_dsu/esu_C_sf"/>
</dbReference>
<dbReference type="InterPro" id="IPR001469">
    <property type="entry name" value="ATP_synth_F1_dsu/esu"/>
</dbReference>
<dbReference type="InterPro" id="IPR020546">
    <property type="entry name" value="ATP_synth_F1_dsu/esu_N"/>
</dbReference>
<dbReference type="InterPro" id="IPR020547">
    <property type="entry name" value="ATP_synth_F1_esu_C"/>
</dbReference>
<dbReference type="InterPro" id="IPR036771">
    <property type="entry name" value="ATPsynth_dsu/esu_N"/>
</dbReference>
<dbReference type="NCBIfam" id="TIGR01216">
    <property type="entry name" value="ATP_synt_epsi"/>
    <property type="match status" value="1"/>
</dbReference>
<dbReference type="NCBIfam" id="NF001847">
    <property type="entry name" value="PRK00571.1-4"/>
    <property type="match status" value="1"/>
</dbReference>
<dbReference type="PANTHER" id="PTHR13822">
    <property type="entry name" value="ATP SYNTHASE DELTA/EPSILON CHAIN"/>
    <property type="match status" value="1"/>
</dbReference>
<dbReference type="PANTHER" id="PTHR13822:SF10">
    <property type="entry name" value="ATP SYNTHASE EPSILON CHAIN, CHLOROPLASTIC"/>
    <property type="match status" value="1"/>
</dbReference>
<dbReference type="Pfam" id="PF00401">
    <property type="entry name" value="ATP-synt_DE"/>
    <property type="match status" value="1"/>
</dbReference>
<dbReference type="Pfam" id="PF02823">
    <property type="entry name" value="ATP-synt_DE_N"/>
    <property type="match status" value="1"/>
</dbReference>
<dbReference type="SUPFAM" id="SSF46604">
    <property type="entry name" value="Epsilon subunit of F1F0-ATP synthase C-terminal domain"/>
    <property type="match status" value="1"/>
</dbReference>
<dbReference type="SUPFAM" id="SSF51344">
    <property type="entry name" value="Epsilon subunit of F1F0-ATP synthase N-terminal domain"/>
    <property type="match status" value="1"/>
</dbReference>
<comment type="function">
    <text evidence="1">Produces ATP from ADP in the presence of a proton gradient across the membrane.</text>
</comment>
<comment type="subunit">
    <text evidence="1">F-type ATPases have 2 components, CF(1) - the catalytic core - and CF(0) - the membrane proton channel. CF(1) has five subunits: alpha(3), beta(3), gamma(1), delta(1), epsilon(1). CF(0) has three main subunits: a, b and c.</text>
</comment>
<comment type="subcellular location">
    <subcellularLocation>
        <location evidence="1">Cell inner membrane</location>
        <topology evidence="1">Peripheral membrane protein</topology>
    </subcellularLocation>
</comment>
<comment type="similarity">
    <text evidence="1">Belongs to the ATPase epsilon chain family.</text>
</comment>
<evidence type="ECO:0000255" key="1">
    <source>
        <dbReference type="HAMAP-Rule" id="MF_00530"/>
    </source>
</evidence>
<reference key="1">
    <citation type="journal article" date="2011" name="J. Bacteriol.">
        <title>Complete genome sequence of the plant growth-promoting endophyte Burkholderia phytofirmans strain PsJN.</title>
        <authorList>
            <person name="Weilharter A."/>
            <person name="Mitter B."/>
            <person name="Shin M.V."/>
            <person name="Chain P.S."/>
            <person name="Nowak J."/>
            <person name="Sessitsch A."/>
        </authorList>
    </citation>
    <scope>NUCLEOTIDE SEQUENCE [LARGE SCALE GENOMIC DNA]</scope>
    <source>
        <strain>DSM 17436 / LMG 22146 / PsJN</strain>
    </source>
</reference>
<organism>
    <name type="scientific">Paraburkholderia phytofirmans (strain DSM 17436 / LMG 22146 / PsJN)</name>
    <name type="common">Burkholderia phytofirmans</name>
    <dbReference type="NCBI Taxonomy" id="398527"/>
    <lineage>
        <taxon>Bacteria</taxon>
        <taxon>Pseudomonadati</taxon>
        <taxon>Pseudomonadota</taxon>
        <taxon>Betaproteobacteria</taxon>
        <taxon>Burkholderiales</taxon>
        <taxon>Burkholderiaceae</taxon>
        <taxon>Paraburkholderia</taxon>
    </lineage>
</organism>